<accession>Q9XHX0</accession>
<accession>B7F3G0</accession>
<comment type="function">
    <text evidence="1">May cause loosening and extension of plant cell walls by disrupting non-covalent bonding between cellulose microfibrils and matrix glucans. No enzymatic activity has been found. May be required for rapid internodal elongation in deepwater rice during submergence (By similarity).</text>
</comment>
<comment type="subcellular location">
    <subcellularLocation>
        <location evidence="1">Secreted</location>
        <location evidence="1">Cell wall</location>
    </subcellularLocation>
    <subcellularLocation>
        <location evidence="1">Membrane</location>
        <topology evidence="1">Peripheral membrane protein</topology>
    </subcellularLocation>
</comment>
<comment type="tissue specificity">
    <text evidence="5">Expressed in roots.</text>
</comment>
<comment type="similarity">
    <text evidence="6">Belongs to the expansin family. Expansin A subfamily.</text>
</comment>
<comment type="online information" name="EXPANSIN homepage">
    <link uri="https://www.dept.psu.edu/biology/groups/expansins/index.htm"/>
</comment>
<sequence length="251" mass="26334">MAAARMLVLLASLCALLLTASAAKWTPAFATFYGGSDASGTMGGACGYGDLYGAGYGTRTAALSTALFNGGASCGACFTIACDTRKTQWCKPGTSITVTATNFCPPNYALSGDAGGWCNPPRRHFDMSQPAWETIAVYRAGIVPVNYRRVPCQRSGGIRFAVNGHSYFELVLVTNVGGSGAVAQMWIKGSGTGWMAMSRNWGANWQSNARLDGQALSFRVQADDGRVVTAADVAPAGWSFGATYTSSAQFY</sequence>
<feature type="signal peptide" evidence="2">
    <location>
        <begin position="1"/>
        <end position="22"/>
    </location>
</feature>
<feature type="chain" id="PRO_0000251987" description="Expansin-A8">
    <location>
        <begin position="23"/>
        <end position="251"/>
    </location>
</feature>
<feature type="domain" description="Expansin-like EG45" evidence="4">
    <location>
        <begin position="43"/>
        <end position="157"/>
    </location>
</feature>
<feature type="domain" description="Expansin-like CBD" evidence="3">
    <location>
        <begin position="167"/>
        <end position="246"/>
    </location>
</feature>
<feature type="disulfide bond" evidence="4">
    <location>
        <begin position="46"/>
        <end position="74"/>
    </location>
</feature>
<feature type="disulfide bond" evidence="4">
    <location>
        <begin position="77"/>
        <end position="152"/>
    </location>
</feature>
<feature type="disulfide bond" evidence="4">
    <location>
        <begin position="82"/>
        <end position="90"/>
    </location>
</feature>
<organism>
    <name type="scientific">Oryza sativa subsp. japonica</name>
    <name type="common">Rice</name>
    <dbReference type="NCBI Taxonomy" id="39947"/>
    <lineage>
        <taxon>Eukaryota</taxon>
        <taxon>Viridiplantae</taxon>
        <taxon>Streptophyta</taxon>
        <taxon>Embryophyta</taxon>
        <taxon>Tracheophyta</taxon>
        <taxon>Spermatophyta</taxon>
        <taxon>Magnoliopsida</taxon>
        <taxon>Liliopsida</taxon>
        <taxon>Poales</taxon>
        <taxon>Poaceae</taxon>
        <taxon>BOP clade</taxon>
        <taxon>Oryzoideae</taxon>
        <taxon>Oryzeae</taxon>
        <taxon>Oryzinae</taxon>
        <taxon>Oryza</taxon>
        <taxon>Oryza sativa</taxon>
    </lineage>
</organism>
<gene>
    <name type="primary">EXPA8</name>
    <name type="synonym">EXP8</name>
    <name type="ordered locus">Os01g0248900</name>
    <name type="ordered locus">LOC_Os01g14650</name>
    <name type="ORF">OSJNBa0049B20.23</name>
    <name type="ORF">P0034C11.30</name>
</gene>
<evidence type="ECO:0000250" key="1"/>
<evidence type="ECO:0000255" key="2"/>
<evidence type="ECO:0000255" key="3">
    <source>
        <dbReference type="PROSITE-ProRule" id="PRU00078"/>
    </source>
</evidence>
<evidence type="ECO:0000255" key="4">
    <source>
        <dbReference type="PROSITE-ProRule" id="PRU00079"/>
    </source>
</evidence>
<evidence type="ECO:0000269" key="5">
    <source>
    </source>
</evidence>
<evidence type="ECO:0000305" key="6"/>
<proteinExistence type="evidence at transcript level"/>
<reference key="1">
    <citation type="journal article" date="2002" name="Nature">
        <title>The genome sequence and structure of rice chromosome 1.</title>
        <authorList>
            <person name="Sasaki T."/>
            <person name="Matsumoto T."/>
            <person name="Yamamoto K."/>
            <person name="Sakata K."/>
            <person name="Baba T."/>
            <person name="Katayose Y."/>
            <person name="Wu J."/>
            <person name="Niimura Y."/>
            <person name="Cheng Z."/>
            <person name="Nagamura Y."/>
            <person name="Antonio B.A."/>
            <person name="Kanamori H."/>
            <person name="Hosokawa S."/>
            <person name="Masukawa M."/>
            <person name="Arikawa K."/>
            <person name="Chiden Y."/>
            <person name="Hayashi M."/>
            <person name="Okamoto M."/>
            <person name="Ando T."/>
            <person name="Aoki H."/>
            <person name="Arita K."/>
            <person name="Hamada M."/>
            <person name="Harada C."/>
            <person name="Hijishita S."/>
            <person name="Honda M."/>
            <person name="Ichikawa Y."/>
            <person name="Idonuma A."/>
            <person name="Iijima M."/>
            <person name="Ikeda M."/>
            <person name="Ikeno M."/>
            <person name="Ito S."/>
            <person name="Ito T."/>
            <person name="Ito Y."/>
            <person name="Ito Y."/>
            <person name="Iwabuchi A."/>
            <person name="Kamiya K."/>
            <person name="Karasawa W."/>
            <person name="Katagiri S."/>
            <person name="Kikuta A."/>
            <person name="Kobayashi N."/>
            <person name="Kono I."/>
            <person name="Machita K."/>
            <person name="Maehara T."/>
            <person name="Mizuno H."/>
            <person name="Mizubayashi T."/>
            <person name="Mukai Y."/>
            <person name="Nagasaki H."/>
            <person name="Nakashima M."/>
            <person name="Nakama Y."/>
            <person name="Nakamichi Y."/>
            <person name="Nakamura M."/>
            <person name="Namiki N."/>
            <person name="Negishi M."/>
            <person name="Ohta I."/>
            <person name="Ono N."/>
            <person name="Saji S."/>
            <person name="Sakai K."/>
            <person name="Shibata M."/>
            <person name="Shimokawa T."/>
            <person name="Shomura A."/>
            <person name="Song J."/>
            <person name="Takazaki Y."/>
            <person name="Terasawa K."/>
            <person name="Tsuji K."/>
            <person name="Waki K."/>
            <person name="Yamagata H."/>
            <person name="Yamane H."/>
            <person name="Yoshiki S."/>
            <person name="Yoshihara R."/>
            <person name="Yukawa K."/>
            <person name="Zhong H."/>
            <person name="Iwama H."/>
            <person name="Endo T."/>
            <person name="Ito H."/>
            <person name="Hahn J.H."/>
            <person name="Kim H.-I."/>
            <person name="Eun M.-Y."/>
            <person name="Yano M."/>
            <person name="Jiang J."/>
            <person name="Gojobori T."/>
        </authorList>
    </citation>
    <scope>NUCLEOTIDE SEQUENCE [LARGE SCALE GENOMIC DNA]</scope>
    <source>
        <strain>cv. Nipponbare</strain>
    </source>
</reference>
<reference key="2">
    <citation type="journal article" date="2005" name="Nature">
        <title>The map-based sequence of the rice genome.</title>
        <authorList>
            <consortium name="International rice genome sequencing project (IRGSP)"/>
        </authorList>
    </citation>
    <scope>NUCLEOTIDE SEQUENCE [LARGE SCALE GENOMIC DNA]</scope>
    <source>
        <strain>cv. Nipponbare</strain>
    </source>
</reference>
<reference key="3">
    <citation type="journal article" date="2008" name="Nucleic Acids Res.">
        <title>The rice annotation project database (RAP-DB): 2008 update.</title>
        <authorList>
            <consortium name="The rice annotation project (RAP)"/>
        </authorList>
    </citation>
    <scope>GENOME REANNOTATION</scope>
    <source>
        <strain>cv. Nipponbare</strain>
    </source>
</reference>
<reference key="4">
    <citation type="journal article" date="2013" name="Rice">
        <title>Improvement of the Oryza sativa Nipponbare reference genome using next generation sequence and optical map data.</title>
        <authorList>
            <person name="Kawahara Y."/>
            <person name="de la Bastide M."/>
            <person name="Hamilton J.P."/>
            <person name="Kanamori H."/>
            <person name="McCombie W.R."/>
            <person name="Ouyang S."/>
            <person name="Schwartz D.C."/>
            <person name="Tanaka T."/>
            <person name="Wu J."/>
            <person name="Zhou S."/>
            <person name="Childs K.L."/>
            <person name="Davidson R.M."/>
            <person name="Lin H."/>
            <person name="Quesada-Ocampo L."/>
            <person name="Vaillancourt B."/>
            <person name="Sakai H."/>
            <person name="Lee S.S."/>
            <person name="Kim J."/>
            <person name="Numa H."/>
            <person name="Itoh T."/>
            <person name="Buell C.R."/>
            <person name="Matsumoto T."/>
        </authorList>
    </citation>
    <scope>GENOME REANNOTATION</scope>
    <source>
        <strain>cv. Nipponbare</strain>
    </source>
</reference>
<reference key="5">
    <citation type="journal article" date="2003" name="Science">
        <title>Collection, mapping, and annotation of over 28,000 cDNA clones from japonica rice.</title>
        <authorList>
            <consortium name="The rice full-length cDNA consortium"/>
        </authorList>
    </citation>
    <scope>NUCLEOTIDE SEQUENCE [LARGE SCALE MRNA]</scope>
    <source>
        <strain>cv. Nipponbare</strain>
    </source>
</reference>
<reference key="6">
    <citation type="journal article" date="2004" name="Plant Mol. Biol.">
        <title>Nomenclature for members of the expansin superfamily of genes and proteins.</title>
        <authorList>
            <person name="Kende H."/>
            <person name="Bradford K.J."/>
            <person name="Brummell D.A."/>
            <person name="Cho H.-T."/>
            <person name="Cosgrove D.J."/>
            <person name="Fleming A.J."/>
            <person name="Gehring C."/>
            <person name="Lee Y."/>
            <person name="McQueen-Mason S.J."/>
            <person name="Rose J.K.C."/>
            <person name="Voesenek L.A.C."/>
        </authorList>
    </citation>
    <scope>NOMENCLATURE</scope>
</reference>
<reference key="7">
    <citation type="journal article" date="2005" name="Mol. Cells">
        <title>Characterization and transcriptional expression of the alpha-expansin gene family in rice.</title>
        <authorList>
            <person name="Shin J.-H."/>
            <person name="Jeong D.-H."/>
            <person name="Park M.C."/>
            <person name="An G."/>
        </authorList>
    </citation>
    <scope>TISSUE SPECIFICITY</scope>
</reference>
<name>EXPA8_ORYSJ</name>
<protein>
    <recommendedName>
        <fullName>Expansin-A8</fullName>
    </recommendedName>
    <alternativeName>
        <fullName>Alpha-expansin-8</fullName>
    </alternativeName>
    <alternativeName>
        <fullName>OsEXP8</fullName>
    </alternativeName>
    <alternativeName>
        <fullName>OsEXPA8</fullName>
    </alternativeName>
    <alternativeName>
        <fullName>OsaEXPa1.17</fullName>
    </alternativeName>
</protein>
<keyword id="KW-0134">Cell wall</keyword>
<keyword id="KW-0961">Cell wall biogenesis/degradation</keyword>
<keyword id="KW-1015">Disulfide bond</keyword>
<keyword id="KW-0472">Membrane</keyword>
<keyword id="KW-1185">Reference proteome</keyword>
<keyword id="KW-0964">Secreted</keyword>
<keyword id="KW-0732">Signal</keyword>
<dbReference type="EMBL" id="AC007789">
    <property type="protein sequence ID" value="AAD38296.1"/>
    <property type="molecule type" value="Genomic_DNA"/>
</dbReference>
<dbReference type="EMBL" id="AP002865">
    <property type="protein sequence ID" value="BAB18336.1"/>
    <property type="molecule type" value="Genomic_DNA"/>
</dbReference>
<dbReference type="EMBL" id="AP008207">
    <property type="protein sequence ID" value="BAF04501.1"/>
    <property type="molecule type" value="Genomic_DNA"/>
</dbReference>
<dbReference type="EMBL" id="AP014957">
    <property type="protein sequence ID" value="BAS71334.1"/>
    <property type="molecule type" value="Genomic_DNA"/>
</dbReference>
<dbReference type="EMBL" id="AK111100">
    <property type="protein sequence ID" value="BAG99157.1"/>
    <property type="molecule type" value="mRNA"/>
</dbReference>
<dbReference type="RefSeq" id="XP_015632452.1">
    <property type="nucleotide sequence ID" value="XM_015776966.1"/>
</dbReference>
<dbReference type="SMR" id="Q9XHX0"/>
<dbReference type="FunCoup" id="Q9XHX0">
    <property type="interactions" value="5"/>
</dbReference>
<dbReference type="STRING" id="39947.Q9XHX0"/>
<dbReference type="PaxDb" id="39947-Q9XHX0"/>
<dbReference type="EnsemblPlants" id="Os01t0248900-01">
    <property type="protein sequence ID" value="Os01t0248900-01"/>
    <property type="gene ID" value="Os01g0248900"/>
</dbReference>
<dbReference type="Gramene" id="Os01t0248900-01">
    <property type="protein sequence ID" value="Os01t0248900-01"/>
    <property type="gene ID" value="Os01g0248900"/>
</dbReference>
<dbReference type="KEGG" id="dosa:Os01g0248900"/>
<dbReference type="eggNOG" id="ENOG502QS90">
    <property type="taxonomic scope" value="Eukaryota"/>
</dbReference>
<dbReference type="HOGENOM" id="CLU_027462_0_1_1"/>
<dbReference type="InParanoid" id="Q9XHX0"/>
<dbReference type="OMA" id="QWMAMSR"/>
<dbReference type="OrthoDB" id="5823761at2759"/>
<dbReference type="Proteomes" id="UP000000763">
    <property type="component" value="Chromosome 1"/>
</dbReference>
<dbReference type="Proteomes" id="UP000059680">
    <property type="component" value="Chromosome 1"/>
</dbReference>
<dbReference type="GO" id="GO:0005576">
    <property type="term" value="C:extracellular region"/>
    <property type="evidence" value="ECO:0007669"/>
    <property type="project" value="UniProtKB-KW"/>
</dbReference>
<dbReference type="GO" id="GO:0016020">
    <property type="term" value="C:membrane"/>
    <property type="evidence" value="ECO:0007669"/>
    <property type="project" value="UniProtKB-SubCell"/>
</dbReference>
<dbReference type="GO" id="GO:0009828">
    <property type="term" value="P:plant-type cell wall loosening"/>
    <property type="evidence" value="ECO:0000250"/>
    <property type="project" value="UniProtKB"/>
</dbReference>
<dbReference type="CDD" id="cd22274">
    <property type="entry name" value="DPBB_EXPA_N"/>
    <property type="match status" value="1"/>
</dbReference>
<dbReference type="FunFam" id="2.40.40.10:FF:000001">
    <property type="entry name" value="Expansin"/>
    <property type="match status" value="1"/>
</dbReference>
<dbReference type="FunFam" id="2.60.40.760:FF:000001">
    <property type="entry name" value="Expansin"/>
    <property type="match status" value="1"/>
</dbReference>
<dbReference type="Gene3D" id="2.60.40.760">
    <property type="entry name" value="Expansin, cellulose-binding-like domain"/>
    <property type="match status" value="1"/>
</dbReference>
<dbReference type="Gene3D" id="2.40.40.10">
    <property type="entry name" value="RlpA-like domain"/>
    <property type="match status" value="1"/>
</dbReference>
<dbReference type="InterPro" id="IPR007118">
    <property type="entry name" value="Expan_Lol_pI"/>
</dbReference>
<dbReference type="InterPro" id="IPR002963">
    <property type="entry name" value="Expansin"/>
</dbReference>
<dbReference type="InterPro" id="IPR007112">
    <property type="entry name" value="Expansin/allergen_DPBB_dom"/>
</dbReference>
<dbReference type="InterPro" id="IPR007117">
    <property type="entry name" value="Expansin_CBD"/>
</dbReference>
<dbReference type="InterPro" id="IPR036749">
    <property type="entry name" value="Expansin_CBD_sf"/>
</dbReference>
<dbReference type="InterPro" id="IPR009009">
    <property type="entry name" value="RlpA-like_DPBB"/>
</dbReference>
<dbReference type="InterPro" id="IPR036908">
    <property type="entry name" value="RlpA-like_sf"/>
</dbReference>
<dbReference type="PANTHER" id="PTHR31867">
    <property type="entry name" value="EXPANSIN-A15"/>
    <property type="match status" value="1"/>
</dbReference>
<dbReference type="Pfam" id="PF03330">
    <property type="entry name" value="DPBB_1"/>
    <property type="match status" value="1"/>
</dbReference>
<dbReference type="Pfam" id="PF01357">
    <property type="entry name" value="Expansin_C"/>
    <property type="match status" value="1"/>
</dbReference>
<dbReference type="PRINTS" id="PR01226">
    <property type="entry name" value="EXPANSIN"/>
</dbReference>
<dbReference type="PRINTS" id="PR01225">
    <property type="entry name" value="EXPANSNFAMLY"/>
</dbReference>
<dbReference type="SMART" id="SM00837">
    <property type="entry name" value="DPBB_1"/>
    <property type="match status" value="1"/>
</dbReference>
<dbReference type="SUPFAM" id="SSF50685">
    <property type="entry name" value="Barwin-like endoglucanases"/>
    <property type="match status" value="1"/>
</dbReference>
<dbReference type="SUPFAM" id="SSF49590">
    <property type="entry name" value="PHL pollen allergen"/>
    <property type="match status" value="1"/>
</dbReference>
<dbReference type="PROSITE" id="PS50843">
    <property type="entry name" value="EXPANSIN_CBD"/>
    <property type="match status" value="1"/>
</dbReference>
<dbReference type="PROSITE" id="PS50842">
    <property type="entry name" value="EXPANSIN_EG45"/>
    <property type="match status" value="1"/>
</dbReference>